<proteinExistence type="inferred from homology"/>
<evidence type="ECO:0000250" key="1"/>
<evidence type="ECO:0000255" key="2"/>
<evidence type="ECO:0000256" key="3">
    <source>
        <dbReference type="SAM" id="MobiDB-lite"/>
    </source>
</evidence>
<evidence type="ECO:0000305" key="4"/>
<comment type="function">
    <text evidence="1">Required for respiratory activity and maintenance and expression of the mitochondrial genome.</text>
</comment>
<comment type="subcellular location">
    <subcellularLocation>
        <location evidence="1">Mitochondrion</location>
    </subcellularLocation>
</comment>
<comment type="similarity">
    <text evidence="4">Belongs to the RRG9 family.</text>
</comment>
<organism>
    <name type="scientific">Phaeosphaeria nodorum (strain SN15 / ATCC MYA-4574 / FGSC 10173)</name>
    <name type="common">Glume blotch fungus</name>
    <name type="synonym">Parastagonospora nodorum</name>
    <dbReference type="NCBI Taxonomy" id="321614"/>
    <lineage>
        <taxon>Eukaryota</taxon>
        <taxon>Fungi</taxon>
        <taxon>Dikarya</taxon>
        <taxon>Ascomycota</taxon>
        <taxon>Pezizomycotina</taxon>
        <taxon>Dothideomycetes</taxon>
        <taxon>Pleosporomycetidae</taxon>
        <taxon>Pleosporales</taxon>
        <taxon>Pleosporineae</taxon>
        <taxon>Phaeosphaeriaceae</taxon>
        <taxon>Parastagonospora</taxon>
    </lineage>
</organism>
<dbReference type="EMBL" id="CH445363">
    <property type="protein sequence ID" value="EAT77048.1"/>
    <property type="molecule type" value="Genomic_DNA"/>
</dbReference>
<dbReference type="RefSeq" id="XP_001805814.1">
    <property type="nucleotide sequence ID" value="XM_001805762.1"/>
</dbReference>
<dbReference type="SMR" id="Q0TY47"/>
<dbReference type="EnsemblFungi" id="SNOT_15673">
    <property type="protein sequence ID" value="SNOT_15673"/>
    <property type="gene ID" value="SNOG_15673"/>
</dbReference>
<dbReference type="GeneID" id="5982744"/>
<dbReference type="KEGG" id="pno:SNOG_15673"/>
<dbReference type="VEuPathDB" id="FungiDB:JI435_156730"/>
<dbReference type="eggNOG" id="ENOG502S7IA">
    <property type="taxonomic scope" value="Eukaryota"/>
</dbReference>
<dbReference type="HOGENOM" id="CLU_047598_1_0_1"/>
<dbReference type="InParanoid" id="Q0TY47"/>
<dbReference type="OMA" id="WRDMGVG"/>
<dbReference type="OrthoDB" id="5578174at2759"/>
<dbReference type="Proteomes" id="UP000001055">
    <property type="component" value="Unassembled WGS sequence"/>
</dbReference>
<dbReference type="GO" id="GO:0005739">
    <property type="term" value="C:mitochondrion"/>
    <property type="evidence" value="ECO:0007669"/>
    <property type="project" value="UniProtKB-SubCell"/>
</dbReference>
<dbReference type="GO" id="GO:0005634">
    <property type="term" value="C:nucleus"/>
    <property type="evidence" value="ECO:0000318"/>
    <property type="project" value="GO_Central"/>
</dbReference>
<dbReference type="InterPro" id="IPR010487">
    <property type="entry name" value="NGRN/Rrg9"/>
</dbReference>
<dbReference type="PANTHER" id="PTHR13475">
    <property type="entry name" value="NEUGRIN"/>
    <property type="match status" value="1"/>
</dbReference>
<dbReference type="PANTHER" id="PTHR13475:SF3">
    <property type="entry name" value="NEUGRIN"/>
    <property type="match status" value="1"/>
</dbReference>
<dbReference type="Pfam" id="PF06413">
    <property type="entry name" value="Neugrin"/>
    <property type="match status" value="1"/>
</dbReference>
<accession>Q0TY47</accession>
<keyword id="KW-0496">Mitochondrion</keyword>
<keyword id="KW-0809">Transit peptide</keyword>
<gene>
    <name type="primary">RRG9</name>
    <name type="ORF">SNOG_15673</name>
</gene>
<reference key="1">
    <citation type="journal article" date="2007" name="Plant Cell">
        <title>Dothideomycete-plant interactions illuminated by genome sequencing and EST analysis of the wheat pathogen Stagonospora nodorum.</title>
        <authorList>
            <person name="Hane J.K."/>
            <person name="Lowe R.G.T."/>
            <person name="Solomon P.S."/>
            <person name="Tan K.-C."/>
            <person name="Schoch C.L."/>
            <person name="Spatafora J.W."/>
            <person name="Crous P.W."/>
            <person name="Kodira C.D."/>
            <person name="Birren B.W."/>
            <person name="Galagan J.E."/>
            <person name="Torriani S.F.F."/>
            <person name="McDonald B.A."/>
            <person name="Oliver R.P."/>
        </authorList>
    </citation>
    <scope>NUCLEOTIDE SEQUENCE [LARGE SCALE GENOMIC DNA]</scope>
    <source>
        <strain>SN15 / ATCC MYA-4574 / FGSC 10173</strain>
    </source>
</reference>
<feature type="transit peptide" description="Mitochondrion" evidence="2">
    <location>
        <begin position="1"/>
        <end position="48"/>
    </location>
</feature>
<feature type="chain" id="PRO_0000407957" description="Required for respiratory growth protein 9, mitochondrial">
    <location>
        <begin position="49"/>
        <end position="256"/>
    </location>
</feature>
<feature type="region of interest" description="Disordered" evidence="3">
    <location>
        <begin position="38"/>
        <end position="65"/>
    </location>
</feature>
<sequence>MSCHNCARRTLGLFIRSFANVEPTFAPKRTLIRNAQPSRLLHASTARAPYKSDQRDRAAPPTQKEADIEAIAENAENAEDDALPAKYERPAWQAHKAALKEKLNGEAWNPRKKLSPDTMEGIRHLHSTQPDKFTTPVLAQHFKVSPEAIRRILKSKWQPSDEEYEARMERWNKRGERIWTNLVEMGVKPPKKWREMGVGRARGGERPKWKSDRRNLVHVRDSASDSFVMDDGDIIPIVDGTGKARRAPDIPLTRRL</sequence>
<name>RRG9_PHANO</name>
<protein>
    <recommendedName>
        <fullName>Required for respiratory growth protein 9, mitochondrial</fullName>
    </recommendedName>
</protein>